<dbReference type="EC" id="5.4.99.27" evidence="1"/>
<dbReference type="EMBL" id="AE017221">
    <property type="protein sequence ID" value="AAS81509.1"/>
    <property type="molecule type" value="Genomic_DNA"/>
</dbReference>
<dbReference type="RefSeq" id="WP_011173578.1">
    <property type="nucleotide sequence ID" value="NC_005835.1"/>
</dbReference>
<dbReference type="SMR" id="Q72IG5"/>
<dbReference type="KEGG" id="tth:TT_C1167"/>
<dbReference type="eggNOG" id="COG0585">
    <property type="taxonomic scope" value="Bacteria"/>
</dbReference>
<dbReference type="HOGENOM" id="CLU_005281_4_0_0"/>
<dbReference type="OrthoDB" id="1550679at2"/>
<dbReference type="Proteomes" id="UP000000592">
    <property type="component" value="Chromosome"/>
</dbReference>
<dbReference type="GO" id="GO:0005829">
    <property type="term" value="C:cytosol"/>
    <property type="evidence" value="ECO:0007669"/>
    <property type="project" value="TreeGrafter"/>
</dbReference>
<dbReference type="GO" id="GO:0003723">
    <property type="term" value="F:RNA binding"/>
    <property type="evidence" value="ECO:0007669"/>
    <property type="project" value="InterPro"/>
</dbReference>
<dbReference type="GO" id="GO:0160150">
    <property type="term" value="F:tRNA pseudouridine(13) synthase activity"/>
    <property type="evidence" value="ECO:0007669"/>
    <property type="project" value="UniProtKB-EC"/>
</dbReference>
<dbReference type="GO" id="GO:0031119">
    <property type="term" value="P:tRNA pseudouridine synthesis"/>
    <property type="evidence" value="ECO:0007669"/>
    <property type="project" value="UniProtKB-UniRule"/>
</dbReference>
<dbReference type="CDD" id="cd02575">
    <property type="entry name" value="PseudoU_synth_EcTruD"/>
    <property type="match status" value="1"/>
</dbReference>
<dbReference type="Gene3D" id="3.30.2350.20">
    <property type="entry name" value="TruD, catalytic domain"/>
    <property type="match status" value="1"/>
</dbReference>
<dbReference type="Gene3D" id="3.30.2340.10">
    <property type="entry name" value="TruD, insertion domain"/>
    <property type="match status" value="1"/>
</dbReference>
<dbReference type="HAMAP" id="MF_01082">
    <property type="entry name" value="TruD"/>
    <property type="match status" value="1"/>
</dbReference>
<dbReference type="InterPro" id="IPR020103">
    <property type="entry name" value="PsdUridine_synth_cat_dom_sf"/>
</dbReference>
<dbReference type="InterPro" id="IPR001656">
    <property type="entry name" value="PsdUridine_synth_TruD"/>
</dbReference>
<dbReference type="InterPro" id="IPR011760">
    <property type="entry name" value="PsdUridine_synth_TruD_insert"/>
</dbReference>
<dbReference type="InterPro" id="IPR042214">
    <property type="entry name" value="TruD_catalytic"/>
</dbReference>
<dbReference type="InterPro" id="IPR043165">
    <property type="entry name" value="TruD_insert_sf"/>
</dbReference>
<dbReference type="InterPro" id="IPR050170">
    <property type="entry name" value="TruD_pseudoU_synthase"/>
</dbReference>
<dbReference type="PANTHER" id="PTHR47811">
    <property type="entry name" value="TRNA PSEUDOURIDINE SYNTHASE D"/>
    <property type="match status" value="1"/>
</dbReference>
<dbReference type="PANTHER" id="PTHR47811:SF1">
    <property type="entry name" value="TRNA PSEUDOURIDINE SYNTHASE D"/>
    <property type="match status" value="1"/>
</dbReference>
<dbReference type="Pfam" id="PF01142">
    <property type="entry name" value="TruD"/>
    <property type="match status" value="2"/>
</dbReference>
<dbReference type="SUPFAM" id="SSF55120">
    <property type="entry name" value="Pseudouridine synthase"/>
    <property type="match status" value="1"/>
</dbReference>
<dbReference type="PROSITE" id="PS50984">
    <property type="entry name" value="TRUD"/>
    <property type="match status" value="1"/>
</dbReference>
<feature type="chain" id="PRO_0000152523" description="tRNA pseudouridine synthase D">
    <location>
        <begin position="1"/>
        <end position="356"/>
    </location>
</feature>
<feature type="domain" description="TRUD" evidence="1">
    <location>
        <begin position="159"/>
        <end position="302"/>
    </location>
</feature>
<feature type="active site" description="Nucleophile" evidence="1">
    <location>
        <position position="84"/>
    </location>
</feature>
<accession>Q72IG5</accession>
<name>TRUD_THET2</name>
<reference key="1">
    <citation type="journal article" date="2004" name="Nat. Biotechnol.">
        <title>The genome sequence of the extreme thermophile Thermus thermophilus.</title>
        <authorList>
            <person name="Henne A."/>
            <person name="Brueggemann H."/>
            <person name="Raasch C."/>
            <person name="Wiezer A."/>
            <person name="Hartsch T."/>
            <person name="Liesegang H."/>
            <person name="Johann A."/>
            <person name="Lienard T."/>
            <person name="Gohl O."/>
            <person name="Martinez-Arias R."/>
            <person name="Jacobi C."/>
            <person name="Starkuviene V."/>
            <person name="Schlenczeck S."/>
            <person name="Dencker S."/>
            <person name="Huber R."/>
            <person name="Klenk H.-P."/>
            <person name="Kramer W."/>
            <person name="Merkl R."/>
            <person name="Gottschalk G."/>
            <person name="Fritz H.-J."/>
        </authorList>
    </citation>
    <scope>NUCLEOTIDE SEQUENCE [LARGE SCALE GENOMIC DNA]</scope>
    <source>
        <strain>ATCC BAA-163 / DSM 7039 / HB27</strain>
    </source>
</reference>
<comment type="function">
    <text evidence="1">Responsible for synthesis of pseudouridine from uracil-13 in transfer RNAs.</text>
</comment>
<comment type="catalytic activity">
    <reaction evidence="1">
        <text>uridine(13) in tRNA = pseudouridine(13) in tRNA</text>
        <dbReference type="Rhea" id="RHEA:42540"/>
        <dbReference type="Rhea" id="RHEA-COMP:10105"/>
        <dbReference type="Rhea" id="RHEA-COMP:10106"/>
        <dbReference type="ChEBI" id="CHEBI:65314"/>
        <dbReference type="ChEBI" id="CHEBI:65315"/>
        <dbReference type="EC" id="5.4.99.27"/>
    </reaction>
</comment>
<comment type="similarity">
    <text evidence="1">Belongs to the pseudouridine synthase TruD family.</text>
</comment>
<evidence type="ECO:0000255" key="1">
    <source>
        <dbReference type="HAMAP-Rule" id="MF_01082"/>
    </source>
</evidence>
<gene>
    <name evidence="1" type="primary">truD</name>
    <name type="ordered locus">TT_C1167</name>
</gene>
<sequence>MDLVFRPERYPFLTQDLPGVGGEIRVEPEDFQVEEVPAYLPKGEGEHLYFLLEKEGRTTREVLEFLRDEVGVPEKEIGVAGLKDKRAKTRQWFSIPRKYEDALCLLENLQGVRLLAADLHTNKLRTGHLKGNRFHILIRRPKGGVAEAEAVLKRLAEKGVPNYYGPQRFGLGGLNPVRGYKLVKEGKGRGSPWLKRFLIGSLQSLLFNDWVALRMALGLYDRVVLGDWAKKHATGGEFLVEDPGEAERALRLEISATGPLFGKKYPEAQGEARAIEDEVLARYGLKREEFRARRGARRPIRVPLAEWKVEEAPEGLWLSFFLPKGSYATSLLREVMKVEALDHLEAEPAPEDAEGL</sequence>
<organism>
    <name type="scientific">Thermus thermophilus (strain ATCC BAA-163 / DSM 7039 / HB27)</name>
    <dbReference type="NCBI Taxonomy" id="262724"/>
    <lineage>
        <taxon>Bacteria</taxon>
        <taxon>Thermotogati</taxon>
        <taxon>Deinococcota</taxon>
        <taxon>Deinococci</taxon>
        <taxon>Thermales</taxon>
        <taxon>Thermaceae</taxon>
        <taxon>Thermus</taxon>
    </lineage>
</organism>
<keyword id="KW-0413">Isomerase</keyword>
<keyword id="KW-0819">tRNA processing</keyword>
<proteinExistence type="inferred from homology"/>
<protein>
    <recommendedName>
        <fullName evidence="1">tRNA pseudouridine synthase D</fullName>
        <ecNumber evidence="1">5.4.99.27</ecNumber>
    </recommendedName>
    <alternativeName>
        <fullName evidence="1">tRNA pseudouridine(13) synthase</fullName>
    </alternativeName>
    <alternativeName>
        <fullName evidence="1">tRNA pseudouridylate synthase D</fullName>
    </alternativeName>
    <alternativeName>
        <fullName evidence="1">tRNA-uridine isomerase D</fullName>
    </alternativeName>
</protein>